<protein>
    <recommendedName>
        <fullName evidence="1">Taurine import ATP-binding protein TauB</fullName>
        <ecNumber evidence="1">7.6.2.7</ecNumber>
    </recommendedName>
</protein>
<gene>
    <name evidence="1" type="primary">tauB</name>
    <name type="ordered locus">Pfl01_0255</name>
</gene>
<name>TAUB_PSEPF</name>
<accession>Q3KJQ7</accession>
<organism>
    <name type="scientific">Pseudomonas fluorescens (strain Pf0-1)</name>
    <dbReference type="NCBI Taxonomy" id="205922"/>
    <lineage>
        <taxon>Bacteria</taxon>
        <taxon>Pseudomonadati</taxon>
        <taxon>Pseudomonadota</taxon>
        <taxon>Gammaproteobacteria</taxon>
        <taxon>Pseudomonadales</taxon>
        <taxon>Pseudomonadaceae</taxon>
        <taxon>Pseudomonas</taxon>
    </lineage>
</organism>
<comment type="function">
    <text evidence="1">Part of the ABC transporter complex TauABC involved in taurine import. Responsible for energy coupling to the transport system.</text>
</comment>
<comment type="catalytic activity">
    <reaction evidence="1">
        <text>taurine(out) + ATP + H2O = taurine(in) + ADP + phosphate + H(+)</text>
        <dbReference type="Rhea" id="RHEA:14613"/>
        <dbReference type="ChEBI" id="CHEBI:15377"/>
        <dbReference type="ChEBI" id="CHEBI:15378"/>
        <dbReference type="ChEBI" id="CHEBI:30616"/>
        <dbReference type="ChEBI" id="CHEBI:43474"/>
        <dbReference type="ChEBI" id="CHEBI:456216"/>
        <dbReference type="ChEBI" id="CHEBI:507393"/>
        <dbReference type="EC" id="7.6.2.7"/>
    </reaction>
</comment>
<comment type="subunit">
    <text evidence="1">The complex is composed of two ATP-binding proteins (TauB), two transmembrane proteins (TauC) and a solute-binding protein (TauA).</text>
</comment>
<comment type="subcellular location">
    <subcellularLocation>
        <location evidence="1">Cell inner membrane</location>
        <topology evidence="1">Peripheral membrane protein</topology>
    </subcellularLocation>
</comment>
<comment type="similarity">
    <text evidence="1">Belongs to the ABC transporter superfamily. Taurine importer (TC 3.A.1.17.1) family.</text>
</comment>
<dbReference type="EC" id="7.6.2.7" evidence="1"/>
<dbReference type="EMBL" id="CP000094">
    <property type="protein sequence ID" value="ABA71999.1"/>
    <property type="molecule type" value="Genomic_DNA"/>
</dbReference>
<dbReference type="RefSeq" id="WP_011331959.1">
    <property type="nucleotide sequence ID" value="NC_007492.2"/>
</dbReference>
<dbReference type="SMR" id="Q3KJQ7"/>
<dbReference type="KEGG" id="pfo:Pfl01_0255"/>
<dbReference type="eggNOG" id="COG4525">
    <property type="taxonomic scope" value="Bacteria"/>
</dbReference>
<dbReference type="HOGENOM" id="CLU_000604_1_22_6"/>
<dbReference type="Proteomes" id="UP000002704">
    <property type="component" value="Chromosome"/>
</dbReference>
<dbReference type="GO" id="GO:0005886">
    <property type="term" value="C:plasma membrane"/>
    <property type="evidence" value="ECO:0007669"/>
    <property type="project" value="UniProtKB-SubCell"/>
</dbReference>
<dbReference type="GO" id="GO:0015411">
    <property type="term" value="F:ABC-type taurine transporter transporter activity"/>
    <property type="evidence" value="ECO:0007669"/>
    <property type="project" value="UniProtKB-EC"/>
</dbReference>
<dbReference type="GO" id="GO:0005524">
    <property type="term" value="F:ATP binding"/>
    <property type="evidence" value="ECO:0007669"/>
    <property type="project" value="UniProtKB-KW"/>
</dbReference>
<dbReference type="GO" id="GO:0016887">
    <property type="term" value="F:ATP hydrolysis activity"/>
    <property type="evidence" value="ECO:0007669"/>
    <property type="project" value="InterPro"/>
</dbReference>
<dbReference type="CDD" id="cd03293">
    <property type="entry name" value="ABC_NrtD_SsuB_transporters"/>
    <property type="match status" value="1"/>
</dbReference>
<dbReference type="Gene3D" id="3.40.50.300">
    <property type="entry name" value="P-loop containing nucleotide triphosphate hydrolases"/>
    <property type="match status" value="1"/>
</dbReference>
<dbReference type="InterPro" id="IPR003593">
    <property type="entry name" value="AAA+_ATPase"/>
</dbReference>
<dbReference type="InterPro" id="IPR003439">
    <property type="entry name" value="ABC_transporter-like_ATP-bd"/>
</dbReference>
<dbReference type="InterPro" id="IPR017871">
    <property type="entry name" value="ABC_transporter-like_CS"/>
</dbReference>
<dbReference type="InterPro" id="IPR050166">
    <property type="entry name" value="ABC_transporter_ATP-bind"/>
</dbReference>
<dbReference type="InterPro" id="IPR027417">
    <property type="entry name" value="P-loop_NTPase"/>
</dbReference>
<dbReference type="NCBIfam" id="NF008421">
    <property type="entry name" value="PRK11248.1"/>
    <property type="match status" value="1"/>
</dbReference>
<dbReference type="PANTHER" id="PTHR42788:SF18">
    <property type="entry name" value="TAURINE IMPORT ATP-BINDING PROTEIN TAUB"/>
    <property type="match status" value="1"/>
</dbReference>
<dbReference type="PANTHER" id="PTHR42788">
    <property type="entry name" value="TAURINE IMPORT ATP-BINDING PROTEIN-RELATED"/>
    <property type="match status" value="1"/>
</dbReference>
<dbReference type="Pfam" id="PF00005">
    <property type="entry name" value="ABC_tran"/>
    <property type="match status" value="1"/>
</dbReference>
<dbReference type="SMART" id="SM00382">
    <property type="entry name" value="AAA"/>
    <property type="match status" value="1"/>
</dbReference>
<dbReference type="SUPFAM" id="SSF52540">
    <property type="entry name" value="P-loop containing nucleoside triphosphate hydrolases"/>
    <property type="match status" value="1"/>
</dbReference>
<dbReference type="PROSITE" id="PS00211">
    <property type="entry name" value="ABC_TRANSPORTER_1"/>
    <property type="match status" value="1"/>
</dbReference>
<dbReference type="PROSITE" id="PS50893">
    <property type="entry name" value="ABC_TRANSPORTER_2"/>
    <property type="match status" value="1"/>
</dbReference>
<dbReference type="PROSITE" id="PS51250">
    <property type="entry name" value="TAUB"/>
    <property type="match status" value="1"/>
</dbReference>
<reference key="1">
    <citation type="journal article" date="2009" name="Genome Biol.">
        <title>Genomic and genetic analyses of diversity and plant interactions of Pseudomonas fluorescens.</title>
        <authorList>
            <person name="Silby M.W."/>
            <person name="Cerdeno-Tarraga A.M."/>
            <person name="Vernikos G.S."/>
            <person name="Giddens S.R."/>
            <person name="Jackson R.W."/>
            <person name="Preston G.M."/>
            <person name="Zhang X.-X."/>
            <person name="Moon C.D."/>
            <person name="Gehrig S.M."/>
            <person name="Godfrey S.A.C."/>
            <person name="Knight C.G."/>
            <person name="Malone J.G."/>
            <person name="Robinson Z."/>
            <person name="Spiers A.J."/>
            <person name="Harris S."/>
            <person name="Challis G.L."/>
            <person name="Yaxley A.M."/>
            <person name="Harris D."/>
            <person name="Seeger K."/>
            <person name="Murphy L."/>
            <person name="Rutter S."/>
            <person name="Squares R."/>
            <person name="Quail M.A."/>
            <person name="Saunders E."/>
            <person name="Mavromatis K."/>
            <person name="Brettin T.S."/>
            <person name="Bentley S.D."/>
            <person name="Hothersall J."/>
            <person name="Stephens E."/>
            <person name="Thomas C.M."/>
            <person name="Parkhill J."/>
            <person name="Levy S.B."/>
            <person name="Rainey P.B."/>
            <person name="Thomson N.R."/>
        </authorList>
    </citation>
    <scope>NUCLEOTIDE SEQUENCE [LARGE SCALE GENOMIC DNA]</scope>
    <source>
        <strain>Pf0-1</strain>
    </source>
</reference>
<keyword id="KW-0067">ATP-binding</keyword>
<keyword id="KW-0997">Cell inner membrane</keyword>
<keyword id="KW-1003">Cell membrane</keyword>
<keyword id="KW-0472">Membrane</keyword>
<keyword id="KW-0547">Nucleotide-binding</keyword>
<keyword id="KW-1278">Translocase</keyword>
<keyword id="KW-0813">Transport</keyword>
<sequence>MALLQLERISAQYPGSPEPVLSDISLTLGPQQLLVALGPSGSGKTSLLNLIAGFVEPSAGRITLDNVPVKGPSAERGVVFQDDALLPWQDVLANVAFGLELAGVAKDKREQRAREMLALVDLSGFEHRRIWQLSGGQKQRVGLARALAADPRVLLMDEPFGALDAFTREQMQELLLQVWQRTAKPVFLITHDIEEAVFLATDLILLAPNPGQIVERLHLDFGQRYAAGESARAIKSDPRFIETREHVLAKVFSQRSAVQRQERA</sequence>
<feature type="chain" id="PRO_0000275836" description="Taurine import ATP-binding protein TauB">
    <location>
        <begin position="1"/>
        <end position="264"/>
    </location>
</feature>
<feature type="domain" description="ABC transporter" evidence="1">
    <location>
        <begin position="4"/>
        <end position="233"/>
    </location>
</feature>
<feature type="binding site" evidence="1">
    <location>
        <begin position="38"/>
        <end position="45"/>
    </location>
    <ligand>
        <name>ATP</name>
        <dbReference type="ChEBI" id="CHEBI:30616"/>
    </ligand>
</feature>
<evidence type="ECO:0000255" key="1">
    <source>
        <dbReference type="HAMAP-Rule" id="MF_01714"/>
    </source>
</evidence>
<proteinExistence type="inferred from homology"/>